<evidence type="ECO:0000250" key="1"/>
<evidence type="ECO:0000305" key="2"/>
<feature type="chain" id="PRO_0000068031" description="Dihydrolipoyl dehydrogenase">
    <location>
        <begin position="1"/>
        <end position="457"/>
    </location>
</feature>
<feature type="active site" description="Proton acceptor" evidence="1">
    <location>
        <position position="437"/>
    </location>
</feature>
<feature type="binding site" evidence="1">
    <location>
        <begin position="32"/>
        <end position="40"/>
    </location>
    <ligand>
        <name>FAD</name>
        <dbReference type="ChEBI" id="CHEBI:57692"/>
    </ligand>
</feature>
<feature type="binding site" evidence="1">
    <location>
        <position position="49"/>
    </location>
    <ligand>
        <name>FAD</name>
        <dbReference type="ChEBI" id="CHEBI:57692"/>
    </ligand>
</feature>
<feature type="binding site" evidence="1">
    <location>
        <position position="113"/>
    </location>
    <ligand>
        <name>FAD</name>
        <dbReference type="ChEBI" id="CHEBI:57692"/>
    </ligand>
</feature>
<feature type="binding site" evidence="1">
    <location>
        <begin position="178"/>
        <end position="182"/>
    </location>
    <ligand>
        <name>NAD(+)</name>
        <dbReference type="ChEBI" id="CHEBI:57540"/>
    </ligand>
</feature>
<feature type="binding site" evidence="1">
    <location>
        <position position="235"/>
    </location>
    <ligand>
        <name>NAD(+)</name>
        <dbReference type="ChEBI" id="CHEBI:57540"/>
    </ligand>
</feature>
<feature type="binding site" evidence="1">
    <location>
        <begin position="262"/>
        <end position="265"/>
    </location>
    <ligand>
        <name>NAD(+)</name>
        <dbReference type="ChEBI" id="CHEBI:57540"/>
    </ligand>
</feature>
<feature type="binding site" evidence="1">
    <location>
        <position position="303"/>
    </location>
    <ligand>
        <name>FAD</name>
        <dbReference type="ChEBI" id="CHEBI:57692"/>
    </ligand>
</feature>
<feature type="binding site" evidence="1">
    <location>
        <position position="311"/>
    </location>
    <ligand>
        <name>FAD</name>
        <dbReference type="ChEBI" id="CHEBI:57692"/>
    </ligand>
</feature>
<feature type="disulfide bond" description="Redox-active" evidence="1">
    <location>
        <begin position="40"/>
        <end position="45"/>
    </location>
</feature>
<feature type="sequence conflict" description="In Ref. 2; AAD10605." evidence="2" ref="2">
    <original>FVKMM</original>
    <variation>LSRWC</variation>
    <location>
        <begin position="388"/>
        <end position="392"/>
    </location>
</feature>
<protein>
    <recommendedName>
        <fullName>Dihydrolipoyl dehydrogenase</fullName>
        <ecNumber>1.8.1.4</ecNumber>
    </recommendedName>
    <alternativeName>
        <fullName>Dihydrolipoamide dehydrogenase</fullName>
    </alternativeName>
    <alternativeName>
        <fullName>E3 component of pyruvate complex</fullName>
    </alternativeName>
</protein>
<accession>P47513</accession>
<accession>Q49233</accession>
<organism>
    <name type="scientific">Mycoplasma genitalium (strain ATCC 33530 / DSM 19775 / NCTC 10195 / G37)</name>
    <name type="common">Mycoplasmoides genitalium</name>
    <dbReference type="NCBI Taxonomy" id="243273"/>
    <lineage>
        <taxon>Bacteria</taxon>
        <taxon>Bacillati</taxon>
        <taxon>Mycoplasmatota</taxon>
        <taxon>Mycoplasmoidales</taxon>
        <taxon>Mycoplasmoidaceae</taxon>
        <taxon>Mycoplasmoides</taxon>
    </lineage>
</organism>
<gene>
    <name type="primary">pdhD</name>
    <name type="ordered locus">MG271</name>
</gene>
<keyword id="KW-0963">Cytoplasm</keyword>
<keyword id="KW-1015">Disulfide bond</keyword>
<keyword id="KW-0274">FAD</keyword>
<keyword id="KW-0285">Flavoprotein</keyword>
<keyword id="KW-0520">NAD</keyword>
<keyword id="KW-0560">Oxidoreductase</keyword>
<keyword id="KW-0676">Redox-active center</keyword>
<keyword id="KW-1185">Reference proteome</keyword>
<proteinExistence type="inferred from homology"/>
<name>DLDH_MYCGE</name>
<reference key="1">
    <citation type="journal article" date="1995" name="Science">
        <title>The minimal gene complement of Mycoplasma genitalium.</title>
        <authorList>
            <person name="Fraser C.M."/>
            <person name="Gocayne J.D."/>
            <person name="White O."/>
            <person name="Adams M.D."/>
            <person name="Clayton R.A."/>
            <person name="Fleischmann R.D."/>
            <person name="Bult C.J."/>
            <person name="Kerlavage A.R."/>
            <person name="Sutton G.G."/>
            <person name="Kelley J.M."/>
            <person name="Fritchman J.L."/>
            <person name="Weidman J.F."/>
            <person name="Small K.V."/>
            <person name="Sandusky M."/>
            <person name="Fuhrmann J.L."/>
            <person name="Nguyen D.T."/>
            <person name="Utterback T.R."/>
            <person name="Saudek D.M."/>
            <person name="Phillips C.A."/>
            <person name="Merrick J.M."/>
            <person name="Tomb J.-F."/>
            <person name="Dougherty B.A."/>
            <person name="Bott K.F."/>
            <person name="Hu P.-C."/>
            <person name="Lucier T.S."/>
            <person name="Peterson S.N."/>
            <person name="Smith H.O."/>
            <person name="Hutchison C.A. III"/>
            <person name="Venter J.C."/>
        </authorList>
    </citation>
    <scope>NUCLEOTIDE SEQUENCE [LARGE SCALE GENOMIC DNA]</scope>
    <source>
        <strain>ATCC 33530 / DSM 19775 / NCTC 10195 / G37</strain>
    </source>
</reference>
<reference key="2">
    <citation type="journal article" date="1993" name="J. Bacteriol.">
        <title>A survey of the Mycoplasma genitalium genome by using random sequencing.</title>
        <authorList>
            <person name="Peterson S.N."/>
            <person name="Hu P.-C."/>
            <person name="Bott K.F."/>
            <person name="Hutchison C.A. III"/>
        </authorList>
    </citation>
    <scope>NUCLEOTIDE SEQUENCE [GENOMIC DNA] OF 306-404</scope>
    <source>
        <strain>ATCC 33530 / DSM 19775 / NCTC 10195 / G37</strain>
    </source>
</reference>
<sequence>MDYDLIILGAGPAGYIAAEYAGKHKLKTLVIEKQYFGGVCLNVGCIPTKTLLKRAKIIDYLVHAKDYGITINGQAKLDWKQLLKQKQEVVDKLVAGVKTIIKGAKVESIEGEATVIDKNKVQVNNTTYTTNNIIVATGSRPRYLTLPGFEKAQQAGFIIDSTQALALEGVPKKFVVVGGGVIGVEFAFLFASLGSEVTIIQGVDRILEVCDSDVSELISKTLKNKGVQIITNAHVVRAENNQLFYTVNGVEQSVIGDKILVSIGRIANTECLDQLDLKRDHNNKIVLNEKLQTSTTNIYLIGDVNTQMMLAHYAYQQGRYAVDQILNQNQVKPAEKNKCPACIYTNPEVAFVGYSEMELQKEKIDYVKSSLPFIYSGKAIADHETNGFVKMMFNPKTGAILGGCIIASTASDIIAELALVMENNLTVFDIANSISPHPTMNEMVTDVCKKAIFDYFS</sequence>
<dbReference type="EC" id="1.8.1.4"/>
<dbReference type="EMBL" id="L43967">
    <property type="protein sequence ID" value="AAC71493.1"/>
    <property type="molecule type" value="Genomic_DNA"/>
</dbReference>
<dbReference type="EMBL" id="U01784">
    <property type="protein sequence ID" value="AAD10605.1"/>
    <property type="molecule type" value="Genomic_DNA"/>
</dbReference>
<dbReference type="PIR" id="I64229">
    <property type="entry name" value="I64229"/>
</dbReference>
<dbReference type="RefSeq" id="WP_009885903.1">
    <property type="nucleotide sequence ID" value="NC_000908.2"/>
</dbReference>
<dbReference type="SMR" id="P47513"/>
<dbReference type="FunCoup" id="P47513">
    <property type="interactions" value="182"/>
</dbReference>
<dbReference type="STRING" id="243273.MG_271"/>
<dbReference type="GeneID" id="88282427"/>
<dbReference type="KEGG" id="mge:MG_271"/>
<dbReference type="eggNOG" id="COG1249">
    <property type="taxonomic scope" value="Bacteria"/>
</dbReference>
<dbReference type="HOGENOM" id="CLU_016755_0_2_14"/>
<dbReference type="InParanoid" id="P47513"/>
<dbReference type="OrthoDB" id="9807946at2"/>
<dbReference type="BioCyc" id="MGEN243273:G1GJ2-329-MONOMER"/>
<dbReference type="Proteomes" id="UP000000807">
    <property type="component" value="Chromosome"/>
</dbReference>
<dbReference type="GO" id="GO:0005737">
    <property type="term" value="C:cytoplasm"/>
    <property type="evidence" value="ECO:0007669"/>
    <property type="project" value="UniProtKB-SubCell"/>
</dbReference>
<dbReference type="GO" id="GO:0004148">
    <property type="term" value="F:dihydrolipoyl dehydrogenase (NADH) activity"/>
    <property type="evidence" value="ECO:0000318"/>
    <property type="project" value="GO_Central"/>
</dbReference>
<dbReference type="GO" id="GO:0050660">
    <property type="term" value="F:flavin adenine dinucleotide binding"/>
    <property type="evidence" value="ECO:0000318"/>
    <property type="project" value="GO_Central"/>
</dbReference>
<dbReference type="GO" id="GO:0006103">
    <property type="term" value="P:2-oxoglutarate metabolic process"/>
    <property type="evidence" value="ECO:0000318"/>
    <property type="project" value="GO_Central"/>
</dbReference>
<dbReference type="GO" id="GO:0006090">
    <property type="term" value="P:pyruvate metabolic process"/>
    <property type="evidence" value="ECO:0000318"/>
    <property type="project" value="GO_Central"/>
</dbReference>
<dbReference type="FunFam" id="3.30.390.30:FF:000001">
    <property type="entry name" value="Dihydrolipoyl dehydrogenase"/>
    <property type="match status" value="1"/>
</dbReference>
<dbReference type="Gene3D" id="3.30.390.30">
    <property type="match status" value="1"/>
</dbReference>
<dbReference type="Gene3D" id="3.50.50.60">
    <property type="entry name" value="FAD/NAD(P)-binding domain"/>
    <property type="match status" value="2"/>
</dbReference>
<dbReference type="InterPro" id="IPR050151">
    <property type="entry name" value="Class-I_Pyr_Nuc-Dis_Oxidored"/>
</dbReference>
<dbReference type="InterPro" id="IPR036188">
    <property type="entry name" value="FAD/NAD-bd_sf"/>
</dbReference>
<dbReference type="InterPro" id="IPR023753">
    <property type="entry name" value="FAD/NAD-binding_dom"/>
</dbReference>
<dbReference type="InterPro" id="IPR016156">
    <property type="entry name" value="FAD/NAD-linked_Rdtase_dimer_sf"/>
</dbReference>
<dbReference type="InterPro" id="IPR006258">
    <property type="entry name" value="Lipoamide_DH"/>
</dbReference>
<dbReference type="InterPro" id="IPR001100">
    <property type="entry name" value="Pyr_nuc-diS_OxRdtase"/>
</dbReference>
<dbReference type="InterPro" id="IPR004099">
    <property type="entry name" value="Pyr_nucl-diS_OxRdtase_dimer"/>
</dbReference>
<dbReference type="InterPro" id="IPR012999">
    <property type="entry name" value="Pyr_OxRdtase_I_AS"/>
</dbReference>
<dbReference type="NCBIfam" id="TIGR01350">
    <property type="entry name" value="lipoamide_DH"/>
    <property type="match status" value="1"/>
</dbReference>
<dbReference type="PANTHER" id="PTHR22912:SF160">
    <property type="entry name" value="DIHYDROLIPOYL DEHYDROGENASE"/>
    <property type="match status" value="1"/>
</dbReference>
<dbReference type="PANTHER" id="PTHR22912">
    <property type="entry name" value="DISULFIDE OXIDOREDUCTASE"/>
    <property type="match status" value="1"/>
</dbReference>
<dbReference type="Pfam" id="PF07992">
    <property type="entry name" value="Pyr_redox_2"/>
    <property type="match status" value="1"/>
</dbReference>
<dbReference type="Pfam" id="PF02852">
    <property type="entry name" value="Pyr_redox_dim"/>
    <property type="match status" value="1"/>
</dbReference>
<dbReference type="PIRSF" id="PIRSF000350">
    <property type="entry name" value="Mercury_reductase_MerA"/>
    <property type="match status" value="1"/>
</dbReference>
<dbReference type="PRINTS" id="PR00368">
    <property type="entry name" value="FADPNR"/>
</dbReference>
<dbReference type="PRINTS" id="PR00411">
    <property type="entry name" value="PNDRDTASEI"/>
</dbReference>
<dbReference type="SUPFAM" id="SSF51905">
    <property type="entry name" value="FAD/NAD(P)-binding domain"/>
    <property type="match status" value="1"/>
</dbReference>
<dbReference type="SUPFAM" id="SSF55424">
    <property type="entry name" value="FAD/NAD-linked reductases, dimerisation (C-terminal) domain"/>
    <property type="match status" value="1"/>
</dbReference>
<dbReference type="PROSITE" id="PS00076">
    <property type="entry name" value="PYRIDINE_REDOX_1"/>
    <property type="match status" value="1"/>
</dbReference>
<comment type="function">
    <text evidence="1">Lipoamide dehydrogenase is a component of the alpha-ketoacid dehydrogenase complexes.</text>
</comment>
<comment type="catalytic activity">
    <reaction>
        <text>N(6)-[(R)-dihydrolipoyl]-L-lysyl-[protein] + NAD(+) = N(6)-[(R)-lipoyl]-L-lysyl-[protein] + NADH + H(+)</text>
        <dbReference type="Rhea" id="RHEA:15045"/>
        <dbReference type="Rhea" id="RHEA-COMP:10474"/>
        <dbReference type="Rhea" id="RHEA-COMP:10475"/>
        <dbReference type="ChEBI" id="CHEBI:15378"/>
        <dbReference type="ChEBI" id="CHEBI:57540"/>
        <dbReference type="ChEBI" id="CHEBI:57945"/>
        <dbReference type="ChEBI" id="CHEBI:83099"/>
        <dbReference type="ChEBI" id="CHEBI:83100"/>
        <dbReference type="EC" id="1.8.1.4"/>
    </reaction>
</comment>
<comment type="cofactor">
    <cofactor evidence="1">
        <name>FAD</name>
        <dbReference type="ChEBI" id="CHEBI:57692"/>
    </cofactor>
    <text evidence="1">Binds 1 FAD per subunit.</text>
</comment>
<comment type="subunit">
    <text evidence="1">Homodimer.</text>
</comment>
<comment type="subcellular location">
    <subcellularLocation>
        <location>Cytoplasm</location>
    </subcellularLocation>
</comment>
<comment type="miscellaneous">
    <text>The active site is a redox-active disulfide bond.</text>
</comment>
<comment type="similarity">
    <text evidence="2">Belongs to the class-I pyridine nucleotide-disulfide oxidoreductase family.</text>
</comment>